<dbReference type="EMBL" id="AE014297">
    <property type="protein sequence ID" value="AAF54234.1"/>
    <property type="molecule type" value="Genomic_DNA"/>
</dbReference>
<dbReference type="EMBL" id="AY061109">
    <property type="protein sequence ID" value="AAL28657.1"/>
    <property type="molecule type" value="mRNA"/>
</dbReference>
<dbReference type="RefSeq" id="NP_649796.1">
    <property type="nucleotide sequence ID" value="NM_141539.4"/>
</dbReference>
<dbReference type="SMR" id="Q9VHR6"/>
<dbReference type="BioGRID" id="66179">
    <property type="interactions" value="7"/>
</dbReference>
<dbReference type="ComplexPortal" id="CPX-2745">
    <property type="entry name" value="ATG1 protein kinase complex"/>
</dbReference>
<dbReference type="FunCoup" id="Q9VHR6">
    <property type="interactions" value="243"/>
</dbReference>
<dbReference type="IntAct" id="Q9VHR6">
    <property type="interactions" value="2"/>
</dbReference>
<dbReference type="STRING" id="7227.FBpp0081333"/>
<dbReference type="GlyGen" id="Q9VHR6">
    <property type="glycosylation" value="2 sites"/>
</dbReference>
<dbReference type="iPTMnet" id="Q9VHR6"/>
<dbReference type="PaxDb" id="7227-FBpp0081333"/>
<dbReference type="DNASU" id="40998"/>
<dbReference type="EnsemblMetazoa" id="FBtr0081843">
    <property type="protein sequence ID" value="FBpp0081333"/>
    <property type="gene ID" value="FBgn0261108"/>
</dbReference>
<dbReference type="GeneID" id="40998"/>
<dbReference type="KEGG" id="dme:Dmel_CG7331"/>
<dbReference type="UCSC" id="CG7331-RA">
    <property type="organism name" value="d. melanogaster"/>
</dbReference>
<dbReference type="AGR" id="FB:FBgn0261108"/>
<dbReference type="CTD" id="9776"/>
<dbReference type="FlyBase" id="FBgn0261108">
    <property type="gene designation" value="Atg13"/>
</dbReference>
<dbReference type="VEuPathDB" id="VectorBase:FBgn0261108"/>
<dbReference type="eggNOG" id="KOG3874">
    <property type="taxonomic scope" value="Eukaryota"/>
</dbReference>
<dbReference type="GeneTree" id="ENSGT00390000007055"/>
<dbReference type="HOGENOM" id="CLU_036365_1_1_1"/>
<dbReference type="InParanoid" id="Q9VHR6"/>
<dbReference type="OMA" id="MSAQRLN"/>
<dbReference type="OrthoDB" id="70161at2759"/>
<dbReference type="PhylomeDB" id="Q9VHR6"/>
<dbReference type="Reactome" id="R-DME-1632852">
    <property type="pathway name" value="Macroautophagy"/>
</dbReference>
<dbReference type="BioGRID-ORCS" id="40998">
    <property type="hits" value="0 hits in 1 CRISPR screen"/>
</dbReference>
<dbReference type="GenomeRNAi" id="40998"/>
<dbReference type="PRO" id="PR:Q9VHR6"/>
<dbReference type="Proteomes" id="UP000000803">
    <property type="component" value="Chromosome 3R"/>
</dbReference>
<dbReference type="Bgee" id="FBgn0261108">
    <property type="expression patterns" value="Expressed in fat body cell in body wall and 254 other cell types or tissues"/>
</dbReference>
<dbReference type="GO" id="GO:1990316">
    <property type="term" value="C:Atg1/ULK1 kinase complex"/>
    <property type="evidence" value="ECO:0000314"/>
    <property type="project" value="FlyBase"/>
</dbReference>
<dbReference type="GO" id="GO:0005776">
    <property type="term" value="C:autophagosome"/>
    <property type="evidence" value="ECO:0000318"/>
    <property type="project" value="GO_Central"/>
</dbReference>
<dbReference type="GO" id="GO:0005829">
    <property type="term" value="C:cytosol"/>
    <property type="evidence" value="ECO:0000318"/>
    <property type="project" value="GO_Central"/>
</dbReference>
<dbReference type="GO" id="GO:0000407">
    <property type="term" value="C:phagophore assembly site"/>
    <property type="evidence" value="ECO:0000318"/>
    <property type="project" value="GO_Central"/>
</dbReference>
<dbReference type="GO" id="GO:0019887">
    <property type="term" value="F:protein kinase regulator activity"/>
    <property type="evidence" value="ECO:0000250"/>
    <property type="project" value="FlyBase"/>
</dbReference>
<dbReference type="GO" id="GO:0060729">
    <property type="term" value="P:intestinal epithelial structure maintenance"/>
    <property type="evidence" value="ECO:0000315"/>
    <property type="project" value="FlyBase"/>
</dbReference>
<dbReference type="GO" id="GO:0035096">
    <property type="term" value="P:larval midgut cell programmed cell death"/>
    <property type="evidence" value="ECO:0000315"/>
    <property type="project" value="FlyBase"/>
</dbReference>
<dbReference type="GO" id="GO:0016236">
    <property type="term" value="P:macroautophagy"/>
    <property type="evidence" value="ECO:0000315"/>
    <property type="project" value="FlyBase"/>
</dbReference>
<dbReference type="GO" id="GO:0000423">
    <property type="term" value="P:mitophagy"/>
    <property type="evidence" value="ECO:0000318"/>
    <property type="project" value="GO_Central"/>
</dbReference>
<dbReference type="GO" id="GO:0034727">
    <property type="term" value="P:piecemeal microautophagy of the nucleus"/>
    <property type="evidence" value="ECO:0000318"/>
    <property type="project" value="GO_Central"/>
</dbReference>
<dbReference type="GO" id="GO:0045850">
    <property type="term" value="P:positive regulation of nurse cell apoptotic process"/>
    <property type="evidence" value="ECO:0000315"/>
    <property type="project" value="FlyBase"/>
</dbReference>
<dbReference type="GO" id="GO:0034497">
    <property type="term" value="P:protein localization to phagophore assembly site"/>
    <property type="evidence" value="ECO:0000318"/>
    <property type="project" value="GO_Central"/>
</dbReference>
<dbReference type="FunFam" id="3.30.900.10:FF:000016">
    <property type="entry name" value="Autophagy-related protein 13"/>
    <property type="match status" value="1"/>
</dbReference>
<dbReference type="Gene3D" id="3.30.900.10">
    <property type="entry name" value="HORMA domain"/>
    <property type="match status" value="1"/>
</dbReference>
<dbReference type="InterPro" id="IPR040182">
    <property type="entry name" value="ATG13"/>
</dbReference>
<dbReference type="InterPro" id="IPR018731">
    <property type="entry name" value="Atg13_N"/>
</dbReference>
<dbReference type="InterPro" id="IPR036570">
    <property type="entry name" value="HORMA_dom_sf"/>
</dbReference>
<dbReference type="PANTHER" id="PTHR13430">
    <property type="match status" value="1"/>
</dbReference>
<dbReference type="PANTHER" id="PTHR13430:SF4">
    <property type="entry name" value="AUTOPHAGY-RELATED PROTEIN 13"/>
    <property type="match status" value="1"/>
</dbReference>
<dbReference type="Pfam" id="PF10033">
    <property type="entry name" value="ATG13"/>
    <property type="match status" value="1"/>
</dbReference>
<evidence type="ECO:0000250" key="1"/>
<evidence type="ECO:0000256" key="2">
    <source>
        <dbReference type="SAM" id="MobiDB-lite"/>
    </source>
</evidence>
<evidence type="ECO:0000269" key="3">
    <source>
    </source>
</evidence>
<evidence type="ECO:0000269" key="4">
    <source>
    </source>
</evidence>
<evidence type="ECO:0000269" key="5">
    <source>
    </source>
</evidence>
<evidence type="ECO:0000305" key="6"/>
<gene>
    <name type="primary">Atg13</name>
    <name type="ORF">CG7331</name>
</gene>
<proteinExistence type="evidence at protein level"/>
<protein>
    <recommendedName>
        <fullName>Autophagy-related protein 13 homolog</fullName>
    </recommendedName>
</protein>
<accession>Q9VHR6</accession>
<comment type="function">
    <text evidence="4 5">Autophagy factor required for autophagosome formation. Target of the TOR kinase signaling pathway that regulates autophagy through the control of the phosphorylation status of Atg13 and Atg1. The Atg1-Atg13 complex functions at multiple levels to mediate and adjust nutrient-dependent autophagic signaling. Involved in the autophagic degradation of dBruce which controls DNA fragmentation in nurse cells.</text>
</comment>
<comment type="subunit">
    <text evidence="4">Interacts with Atg1.</text>
</comment>
<comment type="interaction">
    <interactant intactId="EBI-179591">
        <id>Q9VHR6</id>
    </interactant>
    <interactant intactId="EBI-109195">
        <id>Q9VWQ1</id>
        <label>Atg101</label>
    </interactant>
    <organismsDiffer>false</organismsDiffer>
    <experiments>2</experiments>
</comment>
<comment type="subcellular location">
    <subcellularLocation>
        <location evidence="1">Cytoplasm</location>
        <location evidence="1">Cytosol</location>
    </subcellularLocation>
    <subcellularLocation>
        <location evidence="1">Preautophagosomal structure</location>
    </subcellularLocation>
    <text evidence="1">Under starvation conditions, is localized to puncate structures primarily representing the isolation membrane that sequesters a portion of the cytoplasm resulting in the formation of an autophagosome.</text>
</comment>
<comment type="PTM">
    <text evidence="3 4">Phosphorylated in a nutrient-, TOR- and Atg1 kinase-dependent manner.</text>
</comment>
<comment type="disruption phenotype">
    <text evidence="5">Results in late stage egg chambers that contain persisting nurse cell nuclei without fragmented DNA and attenuation of caspase-3 cleavage.</text>
</comment>
<comment type="similarity">
    <text evidence="6">Belongs to the ATG13 family. Metazoan subfamily.</text>
</comment>
<feature type="chain" id="PRO_0000345156" description="Autophagy-related protein 13 homolog">
    <location>
        <begin position="1"/>
        <end position="523"/>
    </location>
</feature>
<feature type="region of interest" description="Disordered" evidence="2">
    <location>
        <begin position="504"/>
        <end position="523"/>
    </location>
</feature>
<feature type="modified residue" description="Phosphoserine" evidence="3">
    <location>
        <position position="227"/>
    </location>
</feature>
<feature type="modified residue" description="Phosphothreonine" evidence="3">
    <location>
        <position position="238"/>
    </location>
</feature>
<feature type="modified residue" description="Phosphoserine" evidence="3">
    <location>
        <position position="314"/>
    </location>
</feature>
<feature type="modified residue" description="Phosphoserine" evidence="3">
    <location>
        <position position="317"/>
    </location>
</feature>
<keyword id="KW-0072">Autophagy</keyword>
<keyword id="KW-0963">Cytoplasm</keyword>
<keyword id="KW-0597">Phosphoprotein</keyword>
<keyword id="KW-1185">Reference proteome</keyword>
<reference key="1">
    <citation type="journal article" date="2000" name="Science">
        <title>The genome sequence of Drosophila melanogaster.</title>
        <authorList>
            <person name="Adams M.D."/>
            <person name="Celniker S.E."/>
            <person name="Holt R.A."/>
            <person name="Evans C.A."/>
            <person name="Gocayne J.D."/>
            <person name="Amanatides P.G."/>
            <person name="Scherer S.E."/>
            <person name="Li P.W."/>
            <person name="Hoskins R.A."/>
            <person name="Galle R.F."/>
            <person name="George R.A."/>
            <person name="Lewis S.E."/>
            <person name="Richards S."/>
            <person name="Ashburner M."/>
            <person name="Henderson S.N."/>
            <person name="Sutton G.G."/>
            <person name="Wortman J.R."/>
            <person name="Yandell M.D."/>
            <person name="Zhang Q."/>
            <person name="Chen L.X."/>
            <person name="Brandon R.C."/>
            <person name="Rogers Y.-H.C."/>
            <person name="Blazej R.G."/>
            <person name="Champe M."/>
            <person name="Pfeiffer B.D."/>
            <person name="Wan K.H."/>
            <person name="Doyle C."/>
            <person name="Baxter E.G."/>
            <person name="Helt G."/>
            <person name="Nelson C.R."/>
            <person name="Miklos G.L.G."/>
            <person name="Abril J.F."/>
            <person name="Agbayani A."/>
            <person name="An H.-J."/>
            <person name="Andrews-Pfannkoch C."/>
            <person name="Baldwin D."/>
            <person name="Ballew R.M."/>
            <person name="Basu A."/>
            <person name="Baxendale J."/>
            <person name="Bayraktaroglu L."/>
            <person name="Beasley E.M."/>
            <person name="Beeson K.Y."/>
            <person name="Benos P.V."/>
            <person name="Berman B.P."/>
            <person name="Bhandari D."/>
            <person name="Bolshakov S."/>
            <person name="Borkova D."/>
            <person name="Botchan M.R."/>
            <person name="Bouck J."/>
            <person name="Brokstein P."/>
            <person name="Brottier P."/>
            <person name="Burtis K.C."/>
            <person name="Busam D.A."/>
            <person name="Butler H."/>
            <person name="Cadieu E."/>
            <person name="Center A."/>
            <person name="Chandra I."/>
            <person name="Cherry J.M."/>
            <person name="Cawley S."/>
            <person name="Dahlke C."/>
            <person name="Davenport L.B."/>
            <person name="Davies P."/>
            <person name="de Pablos B."/>
            <person name="Delcher A."/>
            <person name="Deng Z."/>
            <person name="Mays A.D."/>
            <person name="Dew I."/>
            <person name="Dietz S.M."/>
            <person name="Dodson K."/>
            <person name="Doup L.E."/>
            <person name="Downes M."/>
            <person name="Dugan-Rocha S."/>
            <person name="Dunkov B.C."/>
            <person name="Dunn P."/>
            <person name="Durbin K.J."/>
            <person name="Evangelista C.C."/>
            <person name="Ferraz C."/>
            <person name="Ferriera S."/>
            <person name="Fleischmann W."/>
            <person name="Fosler C."/>
            <person name="Gabrielian A.E."/>
            <person name="Garg N.S."/>
            <person name="Gelbart W.M."/>
            <person name="Glasser K."/>
            <person name="Glodek A."/>
            <person name="Gong F."/>
            <person name="Gorrell J.H."/>
            <person name="Gu Z."/>
            <person name="Guan P."/>
            <person name="Harris M."/>
            <person name="Harris N.L."/>
            <person name="Harvey D.A."/>
            <person name="Heiman T.J."/>
            <person name="Hernandez J.R."/>
            <person name="Houck J."/>
            <person name="Hostin D."/>
            <person name="Houston K.A."/>
            <person name="Howland T.J."/>
            <person name="Wei M.-H."/>
            <person name="Ibegwam C."/>
            <person name="Jalali M."/>
            <person name="Kalush F."/>
            <person name="Karpen G.H."/>
            <person name="Ke Z."/>
            <person name="Kennison J.A."/>
            <person name="Ketchum K.A."/>
            <person name="Kimmel B.E."/>
            <person name="Kodira C.D."/>
            <person name="Kraft C.L."/>
            <person name="Kravitz S."/>
            <person name="Kulp D."/>
            <person name="Lai Z."/>
            <person name="Lasko P."/>
            <person name="Lei Y."/>
            <person name="Levitsky A.A."/>
            <person name="Li J.H."/>
            <person name="Li Z."/>
            <person name="Liang Y."/>
            <person name="Lin X."/>
            <person name="Liu X."/>
            <person name="Mattei B."/>
            <person name="McIntosh T.C."/>
            <person name="McLeod M.P."/>
            <person name="McPherson D."/>
            <person name="Merkulov G."/>
            <person name="Milshina N.V."/>
            <person name="Mobarry C."/>
            <person name="Morris J."/>
            <person name="Moshrefi A."/>
            <person name="Mount S.M."/>
            <person name="Moy M."/>
            <person name="Murphy B."/>
            <person name="Murphy L."/>
            <person name="Muzny D.M."/>
            <person name="Nelson D.L."/>
            <person name="Nelson D.R."/>
            <person name="Nelson K.A."/>
            <person name="Nixon K."/>
            <person name="Nusskern D.R."/>
            <person name="Pacleb J.M."/>
            <person name="Palazzolo M."/>
            <person name="Pittman G.S."/>
            <person name="Pan S."/>
            <person name="Pollard J."/>
            <person name="Puri V."/>
            <person name="Reese M.G."/>
            <person name="Reinert K."/>
            <person name="Remington K."/>
            <person name="Saunders R.D.C."/>
            <person name="Scheeler F."/>
            <person name="Shen H."/>
            <person name="Shue B.C."/>
            <person name="Siden-Kiamos I."/>
            <person name="Simpson M."/>
            <person name="Skupski M.P."/>
            <person name="Smith T.J."/>
            <person name="Spier E."/>
            <person name="Spradling A.C."/>
            <person name="Stapleton M."/>
            <person name="Strong R."/>
            <person name="Sun E."/>
            <person name="Svirskas R."/>
            <person name="Tector C."/>
            <person name="Turner R."/>
            <person name="Venter E."/>
            <person name="Wang A.H."/>
            <person name="Wang X."/>
            <person name="Wang Z.-Y."/>
            <person name="Wassarman D.A."/>
            <person name="Weinstock G.M."/>
            <person name="Weissenbach J."/>
            <person name="Williams S.M."/>
            <person name="Woodage T."/>
            <person name="Worley K.C."/>
            <person name="Wu D."/>
            <person name="Yang S."/>
            <person name="Yao Q.A."/>
            <person name="Ye J."/>
            <person name="Yeh R.-F."/>
            <person name="Zaveri J.S."/>
            <person name="Zhan M."/>
            <person name="Zhang G."/>
            <person name="Zhao Q."/>
            <person name="Zheng L."/>
            <person name="Zheng X.H."/>
            <person name="Zhong F.N."/>
            <person name="Zhong W."/>
            <person name="Zhou X."/>
            <person name="Zhu S.C."/>
            <person name="Zhu X."/>
            <person name="Smith H.O."/>
            <person name="Gibbs R.A."/>
            <person name="Myers E.W."/>
            <person name="Rubin G.M."/>
            <person name="Venter J.C."/>
        </authorList>
    </citation>
    <scope>NUCLEOTIDE SEQUENCE [LARGE SCALE GENOMIC DNA]</scope>
    <source>
        <strain>Berkeley</strain>
    </source>
</reference>
<reference key="2">
    <citation type="journal article" date="2002" name="Genome Biol.">
        <title>Annotation of the Drosophila melanogaster euchromatic genome: a systematic review.</title>
        <authorList>
            <person name="Misra S."/>
            <person name="Crosby M.A."/>
            <person name="Mungall C.J."/>
            <person name="Matthews B.B."/>
            <person name="Campbell K.S."/>
            <person name="Hradecky P."/>
            <person name="Huang Y."/>
            <person name="Kaminker J.S."/>
            <person name="Millburn G.H."/>
            <person name="Prochnik S.E."/>
            <person name="Smith C.D."/>
            <person name="Tupy J.L."/>
            <person name="Whitfield E.J."/>
            <person name="Bayraktaroglu L."/>
            <person name="Berman B.P."/>
            <person name="Bettencourt B.R."/>
            <person name="Celniker S.E."/>
            <person name="de Grey A.D.N.J."/>
            <person name="Drysdale R.A."/>
            <person name="Harris N.L."/>
            <person name="Richter J."/>
            <person name="Russo S."/>
            <person name="Schroeder A.J."/>
            <person name="Shu S.Q."/>
            <person name="Stapleton M."/>
            <person name="Yamada C."/>
            <person name="Ashburner M."/>
            <person name="Gelbart W.M."/>
            <person name="Rubin G.M."/>
            <person name="Lewis S.E."/>
        </authorList>
    </citation>
    <scope>GENOME REANNOTATION</scope>
    <scope>ALTERNATIVE SPLICING</scope>
    <source>
        <strain>Berkeley</strain>
    </source>
</reference>
<reference key="3">
    <citation type="journal article" date="2002" name="Genome Biol.">
        <title>A Drosophila full-length cDNA resource.</title>
        <authorList>
            <person name="Stapleton M."/>
            <person name="Carlson J.W."/>
            <person name="Brokstein P."/>
            <person name="Yu C."/>
            <person name="Champe M."/>
            <person name="George R.A."/>
            <person name="Guarin H."/>
            <person name="Kronmiller B."/>
            <person name="Pacleb J.M."/>
            <person name="Park S."/>
            <person name="Wan K.H."/>
            <person name="Rubin G.M."/>
            <person name="Celniker S.E."/>
        </authorList>
    </citation>
    <scope>NUCLEOTIDE SEQUENCE [LARGE SCALE MRNA]</scope>
    <source>
        <strain>Berkeley</strain>
        <tissue>Embryo</tissue>
    </source>
</reference>
<reference key="4">
    <citation type="journal article" date="2008" name="J. Proteome Res.">
        <title>Phosphoproteome analysis of Drosophila melanogaster embryos.</title>
        <authorList>
            <person name="Zhai B."/>
            <person name="Villen J."/>
            <person name="Beausoleil S.A."/>
            <person name="Mintseris J."/>
            <person name="Gygi S.P."/>
        </authorList>
    </citation>
    <scope>PHOSPHORYLATION [LARGE SCALE ANALYSIS] AT SER-227; THR-238; SER-314 AND SER-317</scope>
    <scope>IDENTIFICATION BY MASS SPECTROMETRY</scope>
    <source>
        <tissue>Embryo</tissue>
    </source>
</reference>
<reference key="5">
    <citation type="journal article" date="2009" name="Mol. Biol. Cell">
        <title>An Atg1/Atg13 complex with multiple roles in TOR-mediated autophagy regulation.</title>
        <authorList>
            <person name="Chang Y.Y."/>
            <person name="Neufeld T.P."/>
        </authorList>
    </citation>
    <scope>FUNCTION</scope>
    <scope>PHOSPHORYLATION</scope>
    <scope>INTERACTION WITH ATG1</scope>
</reference>
<reference key="6">
    <citation type="journal article" date="2010" name="J. Cell Biol.">
        <title>Autophagic degradation of dBruce controls DNA fragmentation in nurse cells during late Drosophila melanogaster oogenesis.</title>
        <authorList>
            <person name="Nezis I.P."/>
            <person name="Shravage B.V."/>
            <person name="Sagona A.P."/>
            <person name="Lamark T."/>
            <person name="Bjorkoy G."/>
            <person name="Johansen T."/>
            <person name="Rusten T.E."/>
            <person name="Brech A."/>
            <person name="Baehrecke E.H."/>
            <person name="Stenmark H."/>
        </authorList>
    </citation>
    <scope>DISRUPTION PHENOTYPE</scope>
    <scope>FUNCTION</scope>
</reference>
<organism>
    <name type="scientific">Drosophila melanogaster</name>
    <name type="common">Fruit fly</name>
    <dbReference type="NCBI Taxonomy" id="7227"/>
    <lineage>
        <taxon>Eukaryota</taxon>
        <taxon>Metazoa</taxon>
        <taxon>Ecdysozoa</taxon>
        <taxon>Arthropoda</taxon>
        <taxon>Hexapoda</taxon>
        <taxon>Insecta</taxon>
        <taxon>Pterygota</taxon>
        <taxon>Neoptera</taxon>
        <taxon>Endopterygota</taxon>
        <taxon>Diptera</taxon>
        <taxon>Brachycera</taxon>
        <taxon>Muscomorpha</taxon>
        <taxon>Ephydroidea</taxon>
        <taxon>Drosophilidae</taxon>
        <taxon>Drosophila</taxon>
        <taxon>Sophophora</taxon>
    </lineage>
</organism>
<sequence>MSAQRLNAAERDLEKFIKFLVLKSTQVVVQSRLGEKMQTQCNPLAGSDWFNIAVQDHPEVLDETKRALNLKTGESILQRLPLCVEISLKTTEGDQMVLEVWSLDLLQPQNGASPATNDLNPEGQTLKAAHAIYNRMGIMLKSLISLTRTTPAYKLSRRQCPDSYGIFYRIYVDRPQVHTLGEGHKHVKIGQLSTIVGSLVMSVAYRTKLTISPTAAQSESNTIMLKSDHFRPATDANTPGNQQQTQNGTVVAKKLGLGALNPAQGTADRRFIDIEKPLRPGAFTDMGKLKQYTEDDFVLPETPPFEWLLRGRGSVESLNRLDNNSVASVNISNNNNSTQDSKFNQISNLNNNSAGFKSFEKNSENSVSPIKSLLIPASATATYRHHSEPSLQPPPDDDNLLKELHFPFASPTSHVNDLAKFYRECYHAPPLKGLNELQAEISSISSTPPASSGSGGVAACGPTAAATAIATSSADASAMDDLSRQLEQFETSLEDYDKLVSQFGLTGSSSTGSRSSGGLQMSN</sequence>
<name>ATG13_DROME</name>